<gene>
    <name evidence="1" type="primary">argP</name>
    <name type="synonym">iciA</name>
    <name type="ordered locus">Z4253</name>
    <name type="ordered locus">ECs3786</name>
</gene>
<comment type="function">
    <text evidence="1">Controls the transcription of genes involved in arginine and lysine metabolism.</text>
</comment>
<comment type="subunit">
    <text evidence="1">Homodimer.</text>
</comment>
<comment type="similarity">
    <text evidence="2">Belongs to the LysR transcriptional regulatory family.</text>
</comment>
<sequence>MKRPDYRTLQALDAVIRERGFERAAQKLCITQSAVSQRIKQLENMFGQPLLVRTVPPRPTEQGQKLLALLRQVELLEEEWLGDEQTGSTPLLLSLAVNADSLATWLLPALAPVLADSPIRLNLQVEDETRTQERLRRGEVVGAVSIQHQALPSCLVDKLGALDYLFVSSKPFAEKYFPNGVTRSALLKAPVVAFDHLDDMHQAFLQQNFDLPPGSVPCHIVNSSEAFVQLARQGTTCCMIPHLQIEKELASGELIDLTPGLFQRRMLYWHRFAPESRMMRKVTDALLDYGHKVLRQD</sequence>
<name>ARGP_ECO57</name>
<reference key="1">
    <citation type="journal article" date="2001" name="Nature">
        <title>Genome sequence of enterohaemorrhagic Escherichia coli O157:H7.</title>
        <authorList>
            <person name="Perna N.T."/>
            <person name="Plunkett G. III"/>
            <person name="Burland V."/>
            <person name="Mau B."/>
            <person name="Glasner J.D."/>
            <person name="Rose D.J."/>
            <person name="Mayhew G.F."/>
            <person name="Evans P.S."/>
            <person name="Gregor J."/>
            <person name="Kirkpatrick H.A."/>
            <person name="Posfai G."/>
            <person name="Hackett J."/>
            <person name="Klink S."/>
            <person name="Boutin A."/>
            <person name="Shao Y."/>
            <person name="Miller L."/>
            <person name="Grotbeck E.J."/>
            <person name="Davis N.W."/>
            <person name="Lim A."/>
            <person name="Dimalanta E.T."/>
            <person name="Potamousis K."/>
            <person name="Apodaca J."/>
            <person name="Anantharaman T.S."/>
            <person name="Lin J."/>
            <person name="Yen G."/>
            <person name="Schwartz D.C."/>
            <person name="Welch R.A."/>
            <person name="Blattner F.R."/>
        </authorList>
    </citation>
    <scope>NUCLEOTIDE SEQUENCE [LARGE SCALE GENOMIC DNA]</scope>
    <source>
        <strain>O157:H7 / EDL933 / ATCC 700927 / EHEC</strain>
    </source>
</reference>
<reference key="2">
    <citation type="journal article" date="2001" name="DNA Res.">
        <title>Complete genome sequence of enterohemorrhagic Escherichia coli O157:H7 and genomic comparison with a laboratory strain K-12.</title>
        <authorList>
            <person name="Hayashi T."/>
            <person name="Makino K."/>
            <person name="Ohnishi M."/>
            <person name="Kurokawa K."/>
            <person name="Ishii K."/>
            <person name="Yokoyama K."/>
            <person name="Han C.-G."/>
            <person name="Ohtsubo E."/>
            <person name="Nakayama K."/>
            <person name="Murata T."/>
            <person name="Tanaka M."/>
            <person name="Tobe T."/>
            <person name="Iida T."/>
            <person name="Takami H."/>
            <person name="Honda T."/>
            <person name="Sasakawa C."/>
            <person name="Ogasawara N."/>
            <person name="Yasunaga T."/>
            <person name="Kuhara S."/>
            <person name="Shiba T."/>
            <person name="Hattori M."/>
            <person name="Shinagawa H."/>
        </authorList>
    </citation>
    <scope>NUCLEOTIDE SEQUENCE [LARGE SCALE GENOMIC DNA]</scope>
    <source>
        <strain>O157:H7 / Sakai / RIMD 0509952 / EHEC</strain>
    </source>
</reference>
<organism>
    <name type="scientific">Escherichia coli O157:H7</name>
    <dbReference type="NCBI Taxonomy" id="83334"/>
    <lineage>
        <taxon>Bacteria</taxon>
        <taxon>Pseudomonadati</taxon>
        <taxon>Pseudomonadota</taxon>
        <taxon>Gammaproteobacteria</taxon>
        <taxon>Enterobacterales</taxon>
        <taxon>Enterobacteriaceae</taxon>
        <taxon>Escherichia</taxon>
    </lineage>
</organism>
<dbReference type="EMBL" id="AE005174">
    <property type="protein sequence ID" value="AAG58042.1"/>
    <property type="molecule type" value="Genomic_DNA"/>
</dbReference>
<dbReference type="EMBL" id="BA000007">
    <property type="protein sequence ID" value="BAB37209.1"/>
    <property type="molecule type" value="Genomic_DNA"/>
</dbReference>
<dbReference type="PIR" id="B91102">
    <property type="entry name" value="B91102"/>
</dbReference>
<dbReference type="PIR" id="F85947">
    <property type="entry name" value="F85947"/>
</dbReference>
<dbReference type="RefSeq" id="NP_311813.1">
    <property type="nucleotide sequence ID" value="NC_002695.1"/>
</dbReference>
<dbReference type="RefSeq" id="WP_000828351.1">
    <property type="nucleotide sequence ID" value="NZ_VOAI01000003.1"/>
</dbReference>
<dbReference type="SMR" id="P0A8S3"/>
<dbReference type="STRING" id="155864.Z4253"/>
<dbReference type="GeneID" id="916391"/>
<dbReference type="GeneID" id="93779084"/>
<dbReference type="KEGG" id="ece:Z4253"/>
<dbReference type="KEGG" id="ecs:ECs_3786"/>
<dbReference type="PATRIC" id="fig|386585.9.peg.3952"/>
<dbReference type="eggNOG" id="COG0583">
    <property type="taxonomic scope" value="Bacteria"/>
</dbReference>
<dbReference type="HOGENOM" id="CLU_063829_0_0_6"/>
<dbReference type="OMA" id="QGSTCCM"/>
<dbReference type="Proteomes" id="UP000000558">
    <property type="component" value="Chromosome"/>
</dbReference>
<dbReference type="Proteomes" id="UP000002519">
    <property type="component" value="Chromosome"/>
</dbReference>
<dbReference type="GO" id="GO:0003677">
    <property type="term" value="F:DNA binding"/>
    <property type="evidence" value="ECO:0007669"/>
    <property type="project" value="UniProtKB-UniRule"/>
</dbReference>
<dbReference type="GO" id="GO:0003700">
    <property type="term" value="F:DNA-binding transcription factor activity"/>
    <property type="evidence" value="ECO:0007669"/>
    <property type="project" value="UniProtKB-UniRule"/>
</dbReference>
<dbReference type="CDD" id="cd08428">
    <property type="entry name" value="PBP2_IciA_ArgP"/>
    <property type="match status" value="1"/>
</dbReference>
<dbReference type="FunFam" id="1.10.10.10:FF:000061">
    <property type="entry name" value="HTH-type transcriptional regulator ArgP"/>
    <property type="match status" value="1"/>
</dbReference>
<dbReference type="FunFam" id="3.40.190.290:FF:000002">
    <property type="entry name" value="HTH-type transcriptional regulator ArgP"/>
    <property type="match status" value="1"/>
</dbReference>
<dbReference type="Gene3D" id="3.40.190.290">
    <property type="match status" value="1"/>
</dbReference>
<dbReference type="Gene3D" id="1.10.10.10">
    <property type="entry name" value="Winged helix-like DNA-binding domain superfamily/Winged helix DNA-binding domain"/>
    <property type="match status" value="1"/>
</dbReference>
<dbReference type="HAMAP" id="MF_00513">
    <property type="entry name" value="HTH_type_ArgP"/>
    <property type="match status" value="1"/>
</dbReference>
<dbReference type="InterPro" id="IPR017685">
    <property type="entry name" value="ArgP"/>
</dbReference>
<dbReference type="InterPro" id="IPR023490">
    <property type="entry name" value="ArgP_gammaproteobact"/>
</dbReference>
<dbReference type="InterPro" id="IPR050176">
    <property type="entry name" value="LTTR"/>
</dbReference>
<dbReference type="InterPro" id="IPR005119">
    <property type="entry name" value="LysR_subst-bd"/>
</dbReference>
<dbReference type="InterPro" id="IPR000847">
    <property type="entry name" value="Tscrpt_reg_HTH_LysR"/>
</dbReference>
<dbReference type="InterPro" id="IPR036388">
    <property type="entry name" value="WH-like_DNA-bd_sf"/>
</dbReference>
<dbReference type="InterPro" id="IPR036390">
    <property type="entry name" value="WH_DNA-bd_sf"/>
</dbReference>
<dbReference type="NCBIfam" id="TIGR03298">
    <property type="entry name" value="argP"/>
    <property type="match status" value="1"/>
</dbReference>
<dbReference type="NCBIfam" id="NF002964">
    <property type="entry name" value="PRK03635.1"/>
    <property type="match status" value="1"/>
</dbReference>
<dbReference type="NCBIfam" id="NF009888">
    <property type="entry name" value="PRK13348.1"/>
    <property type="match status" value="1"/>
</dbReference>
<dbReference type="PANTHER" id="PTHR30579:SF2">
    <property type="entry name" value="HTH-TYPE TRANSCRIPTIONAL REGULATOR ARGP"/>
    <property type="match status" value="1"/>
</dbReference>
<dbReference type="PANTHER" id="PTHR30579">
    <property type="entry name" value="TRANSCRIPTIONAL REGULATOR"/>
    <property type="match status" value="1"/>
</dbReference>
<dbReference type="Pfam" id="PF00126">
    <property type="entry name" value="HTH_1"/>
    <property type="match status" value="1"/>
</dbReference>
<dbReference type="Pfam" id="PF03466">
    <property type="entry name" value="LysR_substrate"/>
    <property type="match status" value="1"/>
</dbReference>
<dbReference type="PRINTS" id="PR00039">
    <property type="entry name" value="HTHLYSR"/>
</dbReference>
<dbReference type="SUPFAM" id="SSF53850">
    <property type="entry name" value="Periplasmic binding protein-like II"/>
    <property type="match status" value="1"/>
</dbReference>
<dbReference type="SUPFAM" id="SSF46785">
    <property type="entry name" value="Winged helix' DNA-binding domain"/>
    <property type="match status" value="1"/>
</dbReference>
<dbReference type="PROSITE" id="PS50931">
    <property type="entry name" value="HTH_LYSR"/>
    <property type="match status" value="1"/>
</dbReference>
<evidence type="ECO:0000255" key="1">
    <source>
        <dbReference type="HAMAP-Rule" id="MF_00513"/>
    </source>
</evidence>
<evidence type="ECO:0000305" key="2"/>
<proteinExistence type="inferred from homology"/>
<protein>
    <recommendedName>
        <fullName evidence="1">HTH-type transcriptional regulator ArgP</fullName>
    </recommendedName>
</protein>
<keyword id="KW-0238">DNA-binding</keyword>
<keyword id="KW-1185">Reference proteome</keyword>
<keyword id="KW-0804">Transcription</keyword>
<keyword id="KW-0805">Transcription regulation</keyword>
<accession>P0A8S3</accession>
<accession>P24194</accession>
<feature type="chain" id="PRO_0000105643" description="HTH-type transcriptional regulator ArgP">
    <location>
        <begin position="1"/>
        <end position="297"/>
    </location>
</feature>
<feature type="domain" description="HTH lysR-type" evidence="1">
    <location>
        <begin position="4"/>
        <end position="60"/>
    </location>
</feature>
<feature type="DNA-binding region" description="H-T-H motif" evidence="1">
    <location>
        <begin position="21"/>
        <end position="40"/>
    </location>
</feature>